<organism>
    <name type="scientific">Geobacillus sp. (strain WCH70)</name>
    <dbReference type="NCBI Taxonomy" id="471223"/>
    <lineage>
        <taxon>Bacteria</taxon>
        <taxon>Bacillati</taxon>
        <taxon>Bacillota</taxon>
        <taxon>Bacilli</taxon>
        <taxon>Bacillales</taxon>
        <taxon>Anoxybacillaceae</taxon>
        <taxon>Geobacillus</taxon>
    </lineage>
</organism>
<gene>
    <name evidence="1" type="primary">spoIIAB</name>
    <name type="ordered locus">GWCH70_2251</name>
</gene>
<name>SP2AB_GEOSW</name>
<sequence>MRNEMHLQFSALSQNESFARVTVAAFVAQLDPTMDELTEIKTVVSEAVTNAIIHGYNNDPNGIVYISVVIEDGVVHLTIKDEGVGIANIEEARQPLFTTKPELERSGMGFTIMENFMDEVVVQSEVNKGTTVYLKKYITKSKALCN</sequence>
<reference key="1">
    <citation type="submission" date="2009-06" db="EMBL/GenBank/DDBJ databases">
        <title>Complete sequence of chromosome of Geopacillus sp. WCH70.</title>
        <authorList>
            <consortium name="US DOE Joint Genome Institute"/>
            <person name="Lucas S."/>
            <person name="Copeland A."/>
            <person name="Lapidus A."/>
            <person name="Glavina del Rio T."/>
            <person name="Dalin E."/>
            <person name="Tice H."/>
            <person name="Bruce D."/>
            <person name="Goodwin L."/>
            <person name="Pitluck S."/>
            <person name="Chertkov O."/>
            <person name="Brettin T."/>
            <person name="Detter J.C."/>
            <person name="Han C."/>
            <person name="Larimer F."/>
            <person name="Land M."/>
            <person name="Hauser L."/>
            <person name="Kyrpides N."/>
            <person name="Mikhailova N."/>
            <person name="Brumm P."/>
            <person name="Mead D.A."/>
            <person name="Richardson P."/>
        </authorList>
    </citation>
    <scope>NUCLEOTIDE SEQUENCE [LARGE SCALE GENOMIC DNA]</scope>
    <source>
        <strain>WCH70</strain>
    </source>
</reference>
<dbReference type="EC" id="2.7.11.1" evidence="1"/>
<dbReference type="EMBL" id="CP001638">
    <property type="protein sequence ID" value="ACS24959.1"/>
    <property type="molecule type" value="Genomic_DNA"/>
</dbReference>
<dbReference type="SMR" id="C5D403"/>
<dbReference type="STRING" id="471223.GWCH70_2251"/>
<dbReference type="KEGG" id="gwc:GWCH70_2251"/>
<dbReference type="eggNOG" id="COG2172">
    <property type="taxonomic scope" value="Bacteria"/>
</dbReference>
<dbReference type="HOGENOM" id="CLU_090336_11_0_9"/>
<dbReference type="OrthoDB" id="9768808at2"/>
<dbReference type="GO" id="GO:0005524">
    <property type="term" value="F:ATP binding"/>
    <property type="evidence" value="ECO:0007669"/>
    <property type="project" value="UniProtKB-KW"/>
</dbReference>
<dbReference type="GO" id="GO:0106310">
    <property type="term" value="F:protein serine kinase activity"/>
    <property type="evidence" value="ECO:0007669"/>
    <property type="project" value="RHEA"/>
</dbReference>
<dbReference type="GO" id="GO:0004674">
    <property type="term" value="F:protein serine/threonine kinase activity"/>
    <property type="evidence" value="ECO:0007669"/>
    <property type="project" value="UniProtKB-KW"/>
</dbReference>
<dbReference type="GO" id="GO:0016989">
    <property type="term" value="F:sigma factor antagonist activity"/>
    <property type="evidence" value="ECO:0007669"/>
    <property type="project" value="InterPro"/>
</dbReference>
<dbReference type="GO" id="GO:0030436">
    <property type="term" value="P:asexual sporulation"/>
    <property type="evidence" value="ECO:0007669"/>
    <property type="project" value="UniProtKB-UniRule"/>
</dbReference>
<dbReference type="GO" id="GO:0042174">
    <property type="term" value="P:negative regulation of sporulation resulting in formation of a cellular spore"/>
    <property type="evidence" value="ECO:0007669"/>
    <property type="project" value="InterPro"/>
</dbReference>
<dbReference type="GO" id="GO:0030435">
    <property type="term" value="P:sporulation resulting in formation of a cellular spore"/>
    <property type="evidence" value="ECO:0007669"/>
    <property type="project" value="UniProtKB-KW"/>
</dbReference>
<dbReference type="CDD" id="cd16942">
    <property type="entry name" value="HATPase_SpoIIAB-like"/>
    <property type="match status" value="1"/>
</dbReference>
<dbReference type="Gene3D" id="3.30.565.10">
    <property type="entry name" value="Histidine kinase-like ATPase, C-terminal domain"/>
    <property type="match status" value="1"/>
</dbReference>
<dbReference type="HAMAP" id="MF_00637">
    <property type="entry name" value="Anti_sigma_F"/>
    <property type="match status" value="1"/>
</dbReference>
<dbReference type="InterPro" id="IPR050267">
    <property type="entry name" value="Anti-sigma-factor_SerPK"/>
</dbReference>
<dbReference type="InterPro" id="IPR010194">
    <property type="entry name" value="Anti-sigma_F"/>
</dbReference>
<dbReference type="InterPro" id="IPR036890">
    <property type="entry name" value="HATPase_C_sf"/>
</dbReference>
<dbReference type="NCBIfam" id="TIGR01925">
    <property type="entry name" value="spIIAB"/>
    <property type="match status" value="1"/>
</dbReference>
<dbReference type="PANTHER" id="PTHR35526:SF3">
    <property type="entry name" value="ANTI-SIGMA-F FACTOR RSBW"/>
    <property type="match status" value="1"/>
</dbReference>
<dbReference type="PANTHER" id="PTHR35526">
    <property type="entry name" value="ANTI-SIGMA-F FACTOR RSBW-RELATED"/>
    <property type="match status" value="1"/>
</dbReference>
<dbReference type="Pfam" id="PF13581">
    <property type="entry name" value="HATPase_c_2"/>
    <property type="match status" value="1"/>
</dbReference>
<dbReference type="SMART" id="SM00387">
    <property type="entry name" value="HATPase_c"/>
    <property type="match status" value="1"/>
</dbReference>
<dbReference type="SUPFAM" id="SSF55874">
    <property type="entry name" value="ATPase domain of HSP90 chaperone/DNA topoisomerase II/histidine kinase"/>
    <property type="match status" value="1"/>
</dbReference>
<feature type="chain" id="PRO_1000212368" description="Anti-sigma F factor">
    <location>
        <begin position="1"/>
        <end position="146"/>
    </location>
</feature>
<keyword id="KW-0067">ATP-binding</keyword>
<keyword id="KW-0418">Kinase</keyword>
<keyword id="KW-0547">Nucleotide-binding</keyword>
<keyword id="KW-0723">Serine/threonine-protein kinase</keyword>
<keyword id="KW-0749">Sporulation</keyword>
<keyword id="KW-0808">Transferase</keyword>
<protein>
    <recommendedName>
        <fullName evidence="1">Anti-sigma F factor</fullName>
        <ecNumber evidence="1">2.7.11.1</ecNumber>
    </recommendedName>
    <alternativeName>
        <fullName evidence="1">Stage II sporulation protein AB</fullName>
    </alternativeName>
</protein>
<comment type="function">
    <text evidence="1">Binds to sigma F and blocks its ability to form an RNA polymerase holoenzyme (E-sigma F). Phosphorylates SpoIIAA on a serine residue. This phosphorylation may enable SpoIIAA to act as an anti-anti-sigma factor that counteracts SpoIIAB and thus releases sigma F from inhibition.</text>
</comment>
<comment type="catalytic activity">
    <reaction evidence="1">
        <text>L-seryl-[protein] + ATP = O-phospho-L-seryl-[protein] + ADP + H(+)</text>
        <dbReference type="Rhea" id="RHEA:17989"/>
        <dbReference type="Rhea" id="RHEA-COMP:9863"/>
        <dbReference type="Rhea" id="RHEA-COMP:11604"/>
        <dbReference type="ChEBI" id="CHEBI:15378"/>
        <dbReference type="ChEBI" id="CHEBI:29999"/>
        <dbReference type="ChEBI" id="CHEBI:30616"/>
        <dbReference type="ChEBI" id="CHEBI:83421"/>
        <dbReference type="ChEBI" id="CHEBI:456216"/>
        <dbReference type="EC" id="2.7.11.1"/>
    </reaction>
</comment>
<comment type="catalytic activity">
    <reaction evidence="1">
        <text>L-threonyl-[protein] + ATP = O-phospho-L-threonyl-[protein] + ADP + H(+)</text>
        <dbReference type="Rhea" id="RHEA:46608"/>
        <dbReference type="Rhea" id="RHEA-COMP:11060"/>
        <dbReference type="Rhea" id="RHEA-COMP:11605"/>
        <dbReference type="ChEBI" id="CHEBI:15378"/>
        <dbReference type="ChEBI" id="CHEBI:30013"/>
        <dbReference type="ChEBI" id="CHEBI:30616"/>
        <dbReference type="ChEBI" id="CHEBI:61977"/>
        <dbReference type="ChEBI" id="CHEBI:456216"/>
        <dbReference type="EC" id="2.7.11.1"/>
    </reaction>
</comment>
<comment type="similarity">
    <text evidence="1">Belongs to the anti-sigma-factor family.</text>
</comment>
<accession>C5D403</accession>
<evidence type="ECO:0000255" key="1">
    <source>
        <dbReference type="HAMAP-Rule" id="MF_00637"/>
    </source>
</evidence>
<proteinExistence type="inferred from homology"/>